<keyword id="KW-0002">3D-structure</keyword>
<keyword id="KW-0119">Carbohydrate metabolism</keyword>
<keyword id="KW-0963">Cytoplasm</keyword>
<keyword id="KW-0326">Glycosidase</keyword>
<keyword id="KW-0378">Hydrolase</keyword>
<keyword id="KW-1185">Reference proteome</keyword>
<comment type="catalytic activity">
    <reaction>
        <text>hydrolysis of (1-&gt;4)-alpha-D-glucosidic linkage in 4-alpha-D-[(1-&gt;4)-alpha-D-glucanosyl]n trehalose to yield trehalose and (1-&gt;4)-alpha-D-glucan.</text>
        <dbReference type="EC" id="3.2.1.141"/>
    </reaction>
</comment>
<comment type="pathway">
    <text>Glycan biosynthesis; trehalose biosynthesis.</text>
</comment>
<comment type="subunit">
    <text evidence="4">Monomer.</text>
</comment>
<comment type="subcellular location">
    <subcellularLocation>
        <location evidence="1">Cytoplasm</location>
    </subcellularLocation>
</comment>
<comment type="similarity">
    <text evidence="5">Belongs to the glycosyl hydrolase 13 family.</text>
</comment>
<accession>Q9RX51</accession>
<reference key="1">
    <citation type="journal article" date="1999" name="Science">
        <title>Genome sequence of the radioresistant bacterium Deinococcus radiodurans R1.</title>
        <authorList>
            <person name="White O."/>
            <person name="Eisen J.A."/>
            <person name="Heidelberg J.F."/>
            <person name="Hickey E.K."/>
            <person name="Peterson J.D."/>
            <person name="Dodson R.J."/>
            <person name="Haft D.H."/>
            <person name="Gwinn M.L."/>
            <person name="Nelson W.C."/>
            <person name="Richardson D.L."/>
            <person name="Moffat K.S."/>
            <person name="Qin H."/>
            <person name="Jiang L."/>
            <person name="Pamphile W."/>
            <person name="Crosby M."/>
            <person name="Shen M."/>
            <person name="Vamathevan J.J."/>
            <person name="Lam P."/>
            <person name="McDonald L.A."/>
            <person name="Utterback T.R."/>
            <person name="Zalewski C."/>
            <person name="Makarova K.S."/>
            <person name="Aravind L."/>
            <person name="Daly M.J."/>
            <person name="Minton K.W."/>
            <person name="Fleischmann R.D."/>
            <person name="Ketchum K.A."/>
            <person name="Nelson K.E."/>
            <person name="Salzberg S.L."/>
            <person name="Smith H.O."/>
            <person name="Venter J.C."/>
            <person name="Fraser C.M."/>
        </authorList>
    </citation>
    <scope>NUCLEOTIDE SEQUENCE [LARGE SCALE GENOMIC DNA]</scope>
    <source>
        <strain>ATCC 13939 / DSM 20539 / JCM 16871 / CCUG 27074 / LMG 4051 / NBRC 15346 / NCIMB 9279 / VKM B-1422 / R1</strain>
    </source>
</reference>
<reference key="2">
    <citation type="journal article" date="2005" name="J. Mol. Biol.">
        <title>Crystal structure of maltooligosyltrehalose trehalohydrolase from Deinococcus radiodurans in complex with disaccharides.</title>
        <authorList>
            <person name="Timmins J."/>
            <person name="Leiros H.K."/>
            <person name="Leonard G."/>
            <person name="Leiros I."/>
            <person name="McSweeney S."/>
        </authorList>
    </citation>
    <scope>X-RAY CRYSTALLOGRAPHY (1.1 ANGSTROMS) OF 14-600 IN COMPLEX WITH MALTOSE AND TREHALOSE</scope>
    <scope>SUBUNIT</scope>
</reference>
<evidence type="ECO:0000250" key="1"/>
<evidence type="ECO:0000250" key="2">
    <source>
        <dbReference type="UniProtKB" id="Q55088"/>
    </source>
</evidence>
<evidence type="ECO:0000256" key="3">
    <source>
        <dbReference type="SAM" id="MobiDB-lite"/>
    </source>
</evidence>
<evidence type="ECO:0000269" key="4">
    <source>
    </source>
</evidence>
<evidence type="ECO:0000305" key="5"/>
<evidence type="ECO:0000305" key="6">
    <source>
    </source>
</evidence>
<evidence type="ECO:0007829" key="7">
    <source>
        <dbReference type="PDB" id="2BHU"/>
    </source>
</evidence>
<evidence type="ECO:0007829" key="8">
    <source>
        <dbReference type="PDB" id="2BHZ"/>
    </source>
</evidence>
<evidence type="ECO:0007829" key="9">
    <source>
        <dbReference type="PDB" id="2BXZ"/>
    </source>
</evidence>
<name>TREZ_DEIRA</name>
<dbReference type="EC" id="3.2.1.141"/>
<dbReference type="EMBL" id="AE000513">
    <property type="protein sequence ID" value="AAF10042.1"/>
    <property type="molecule type" value="Genomic_DNA"/>
</dbReference>
<dbReference type="PIR" id="H75516">
    <property type="entry name" value="H75516"/>
</dbReference>
<dbReference type="RefSeq" id="NP_294187.1">
    <property type="nucleotide sequence ID" value="NC_001263.1"/>
</dbReference>
<dbReference type="RefSeq" id="WP_010887109.1">
    <property type="nucleotide sequence ID" value="NC_001263.1"/>
</dbReference>
<dbReference type="PDB" id="2BHU">
    <property type="method" value="X-ray"/>
    <property type="resolution" value="1.10 A"/>
    <property type="chains" value="A=1-600"/>
</dbReference>
<dbReference type="PDB" id="2BHY">
    <property type="method" value="X-ray"/>
    <property type="resolution" value="1.50 A"/>
    <property type="chains" value="A=1-600"/>
</dbReference>
<dbReference type="PDB" id="2BHZ">
    <property type="method" value="X-ray"/>
    <property type="resolution" value="1.20 A"/>
    <property type="chains" value="A=1-600"/>
</dbReference>
<dbReference type="PDB" id="2BXY">
    <property type="method" value="X-ray"/>
    <property type="resolution" value="1.75 A"/>
    <property type="chains" value="A=1-600"/>
</dbReference>
<dbReference type="PDB" id="2BXZ">
    <property type="method" value="X-ray"/>
    <property type="resolution" value="1.75 A"/>
    <property type="chains" value="A=1-600"/>
</dbReference>
<dbReference type="PDB" id="2BY0">
    <property type="method" value="X-ray"/>
    <property type="resolution" value="1.55 A"/>
    <property type="chains" value="A=1-600"/>
</dbReference>
<dbReference type="PDB" id="2BY1">
    <property type="method" value="X-ray"/>
    <property type="resolution" value="1.55 A"/>
    <property type="chains" value="A=1-600"/>
</dbReference>
<dbReference type="PDB" id="2BY2">
    <property type="method" value="X-ray"/>
    <property type="resolution" value="1.50 A"/>
    <property type="chains" value="A=1-600"/>
</dbReference>
<dbReference type="PDB" id="2BY3">
    <property type="method" value="X-ray"/>
    <property type="resolution" value="1.50 A"/>
    <property type="chains" value="A=1-600"/>
</dbReference>
<dbReference type="PDBsum" id="2BHU"/>
<dbReference type="PDBsum" id="2BHY"/>
<dbReference type="PDBsum" id="2BHZ"/>
<dbReference type="PDBsum" id="2BXY"/>
<dbReference type="PDBsum" id="2BXZ"/>
<dbReference type="PDBsum" id="2BY0"/>
<dbReference type="PDBsum" id="2BY1"/>
<dbReference type="PDBsum" id="2BY2"/>
<dbReference type="PDBsum" id="2BY3"/>
<dbReference type="SMR" id="Q9RX51"/>
<dbReference type="STRING" id="243230.DR_0464"/>
<dbReference type="DrugBank" id="DB02379">
    <property type="generic name" value="Beta-D-Glucose"/>
</dbReference>
<dbReference type="DrugBank" id="DB03323">
    <property type="generic name" value="Maltose"/>
</dbReference>
<dbReference type="CAZy" id="CBM48">
    <property type="family name" value="Carbohydrate-Binding Module Family 48"/>
</dbReference>
<dbReference type="CAZy" id="GH13">
    <property type="family name" value="Glycoside Hydrolase Family 13"/>
</dbReference>
<dbReference type="PaxDb" id="243230-DR_0464"/>
<dbReference type="EnsemblBacteria" id="AAF10042">
    <property type="protein sequence ID" value="AAF10042"/>
    <property type="gene ID" value="DR_0464"/>
</dbReference>
<dbReference type="KEGG" id="dra:DR_0464"/>
<dbReference type="PATRIC" id="fig|243230.17.peg.641"/>
<dbReference type="eggNOG" id="COG0296">
    <property type="taxonomic scope" value="Bacteria"/>
</dbReference>
<dbReference type="HOGENOM" id="CLU_020726_0_0_0"/>
<dbReference type="InParanoid" id="Q9RX51"/>
<dbReference type="OrthoDB" id="9800174at2"/>
<dbReference type="BRENDA" id="3.2.1.141">
    <property type="organism ID" value="1856"/>
</dbReference>
<dbReference type="UniPathway" id="UPA00299"/>
<dbReference type="EvolutionaryTrace" id="Q9RX51"/>
<dbReference type="Proteomes" id="UP000002524">
    <property type="component" value="Chromosome 1"/>
</dbReference>
<dbReference type="GO" id="GO:0005737">
    <property type="term" value="C:cytoplasm"/>
    <property type="evidence" value="ECO:0007669"/>
    <property type="project" value="UniProtKB-SubCell"/>
</dbReference>
<dbReference type="GO" id="GO:0033942">
    <property type="term" value="F:4-alpha-D-(1-&gt;4)-alpha-D-glucanotrehalose trehalohydrolase activity"/>
    <property type="evidence" value="ECO:0007669"/>
    <property type="project" value="UniProtKB-EC"/>
</dbReference>
<dbReference type="GO" id="GO:0005992">
    <property type="term" value="P:trehalose biosynthetic process"/>
    <property type="evidence" value="ECO:0007669"/>
    <property type="project" value="UniProtKB-UniPathway"/>
</dbReference>
<dbReference type="CDD" id="cd11325">
    <property type="entry name" value="AmyAc_GTHase"/>
    <property type="match status" value="1"/>
</dbReference>
<dbReference type="CDD" id="cd02853">
    <property type="entry name" value="E_set_MTHase_like_N"/>
    <property type="match status" value="1"/>
</dbReference>
<dbReference type="Gene3D" id="1.10.10.760">
    <property type="entry name" value="E-set domains of sugar-utilizing enzymes"/>
    <property type="match status" value="1"/>
</dbReference>
<dbReference type="Gene3D" id="3.20.20.80">
    <property type="entry name" value="Glycosidases"/>
    <property type="match status" value="1"/>
</dbReference>
<dbReference type="Gene3D" id="2.60.40.1180">
    <property type="entry name" value="Golgi alpha-mannosidase II"/>
    <property type="match status" value="1"/>
</dbReference>
<dbReference type="Gene3D" id="2.60.40.10">
    <property type="entry name" value="Immunoglobulins"/>
    <property type="match status" value="1"/>
</dbReference>
<dbReference type="InterPro" id="IPR022567">
    <property type="entry name" value="DUF3459"/>
</dbReference>
<dbReference type="InterPro" id="IPR006047">
    <property type="entry name" value="Glyco_hydro_13_cat_dom"/>
</dbReference>
<dbReference type="InterPro" id="IPR004193">
    <property type="entry name" value="Glyco_hydro_13_N"/>
</dbReference>
<dbReference type="InterPro" id="IPR013780">
    <property type="entry name" value="Glyco_hydro_b"/>
</dbReference>
<dbReference type="InterPro" id="IPR017853">
    <property type="entry name" value="Glycoside_hydrolase_SF"/>
</dbReference>
<dbReference type="InterPro" id="IPR013783">
    <property type="entry name" value="Ig-like_fold"/>
</dbReference>
<dbReference type="InterPro" id="IPR014756">
    <property type="entry name" value="Ig_E-set"/>
</dbReference>
<dbReference type="InterPro" id="IPR012768">
    <property type="entry name" value="Trehalose_TreZ"/>
</dbReference>
<dbReference type="InterPro" id="IPR044901">
    <property type="entry name" value="Trehalose_TreZ_E-set_sf"/>
</dbReference>
<dbReference type="NCBIfam" id="TIGR02402">
    <property type="entry name" value="trehalose_TreZ"/>
    <property type="match status" value="1"/>
</dbReference>
<dbReference type="PANTHER" id="PTHR43651">
    <property type="entry name" value="1,4-ALPHA-GLUCAN-BRANCHING ENZYME"/>
    <property type="match status" value="1"/>
</dbReference>
<dbReference type="PANTHER" id="PTHR43651:SF11">
    <property type="entry name" value="MALTO-OLIGOSYLTREHALOSE TREHALOHYDROLASE"/>
    <property type="match status" value="1"/>
</dbReference>
<dbReference type="Pfam" id="PF00128">
    <property type="entry name" value="Alpha-amylase"/>
    <property type="match status" value="1"/>
</dbReference>
<dbReference type="Pfam" id="PF02922">
    <property type="entry name" value="CBM_48"/>
    <property type="match status" value="1"/>
</dbReference>
<dbReference type="Pfam" id="PF11941">
    <property type="entry name" value="DUF3459"/>
    <property type="match status" value="1"/>
</dbReference>
<dbReference type="PIRSF" id="PIRSF006337">
    <property type="entry name" value="Trehalose_TreZ"/>
    <property type="match status" value="1"/>
</dbReference>
<dbReference type="SMART" id="SM00642">
    <property type="entry name" value="Aamy"/>
    <property type="match status" value="1"/>
</dbReference>
<dbReference type="SUPFAM" id="SSF51445">
    <property type="entry name" value="(Trans)glycosidases"/>
    <property type="match status" value="1"/>
</dbReference>
<dbReference type="SUPFAM" id="SSF81296">
    <property type="entry name" value="E set domains"/>
    <property type="match status" value="1"/>
</dbReference>
<dbReference type="SUPFAM" id="SSF51011">
    <property type="entry name" value="Glycosyl hydrolase domain"/>
    <property type="match status" value="1"/>
</dbReference>
<organism>
    <name type="scientific">Deinococcus radiodurans (strain ATCC 13939 / DSM 20539 / JCM 16871 / CCUG 27074 / LMG 4051 / NBRC 15346 / NCIMB 9279 / VKM B-1422 / R1)</name>
    <dbReference type="NCBI Taxonomy" id="243230"/>
    <lineage>
        <taxon>Bacteria</taxon>
        <taxon>Thermotogati</taxon>
        <taxon>Deinococcota</taxon>
        <taxon>Deinococci</taxon>
        <taxon>Deinococcales</taxon>
        <taxon>Deinococcaceae</taxon>
        <taxon>Deinococcus</taxon>
    </lineage>
</organism>
<feature type="chain" id="PRO_0000393750" description="Malto-oligosyltrehalose trehalohydrolase">
    <location>
        <begin position="1"/>
        <end position="600"/>
    </location>
</feature>
<feature type="region of interest" description="Disordered" evidence="3">
    <location>
        <begin position="1"/>
        <end position="34"/>
    </location>
</feature>
<feature type="active site" description="Nucleophile" evidence="5">
    <location>
        <position position="275"/>
    </location>
</feature>
<feature type="active site" description="Proton donor" evidence="5">
    <location>
        <position position="308"/>
    </location>
</feature>
<feature type="binding site" evidence="2">
    <location>
        <begin position="273"/>
        <end position="278"/>
    </location>
    <ligand>
        <name>substrate</name>
    </ligand>
</feature>
<feature type="binding site" evidence="6">
    <location>
        <begin position="328"/>
        <end position="332"/>
    </location>
    <ligand>
        <name>substrate</name>
    </ligand>
</feature>
<feature type="binding site" evidence="6">
    <location>
        <position position="376"/>
    </location>
    <ligand>
        <name>substrate</name>
    </ligand>
</feature>
<feature type="binding site" evidence="2">
    <location>
        <begin position="399"/>
        <end position="404"/>
    </location>
    <ligand>
        <name>substrate</name>
    </ligand>
</feature>
<feature type="site" description="Transition state stabilizer" evidence="5">
    <location>
        <position position="400"/>
    </location>
</feature>
<feature type="helix" evidence="7">
    <location>
        <begin position="21"/>
        <end position="23"/>
    </location>
</feature>
<feature type="strand" evidence="7">
    <location>
        <begin position="25"/>
        <end position="29"/>
    </location>
</feature>
<feature type="helix" evidence="7">
    <location>
        <begin position="31"/>
        <end position="33"/>
    </location>
</feature>
<feature type="strand" evidence="7">
    <location>
        <begin position="36"/>
        <end position="41"/>
    </location>
</feature>
<feature type="strand" evidence="7">
    <location>
        <begin position="46"/>
        <end position="52"/>
    </location>
</feature>
<feature type="strand" evidence="7">
    <location>
        <begin position="55"/>
        <end position="58"/>
    </location>
</feature>
<feature type="strand" evidence="7">
    <location>
        <begin position="60"/>
        <end position="63"/>
    </location>
</feature>
<feature type="strand" evidence="7">
    <location>
        <begin position="66"/>
        <end position="72"/>
    </location>
</feature>
<feature type="strand" evidence="7">
    <location>
        <begin position="78"/>
        <end position="83"/>
    </location>
</feature>
<feature type="strand" evidence="7">
    <location>
        <begin position="86"/>
        <end position="88"/>
    </location>
</feature>
<feature type="helix" evidence="9">
    <location>
        <begin position="109"/>
        <end position="111"/>
    </location>
</feature>
<feature type="helix" evidence="7">
    <location>
        <begin position="124"/>
        <end position="126"/>
    </location>
</feature>
<feature type="strand" evidence="7">
    <location>
        <begin position="129"/>
        <end position="132"/>
    </location>
</feature>
<feature type="helix" evidence="7">
    <location>
        <begin position="134"/>
        <end position="137"/>
    </location>
</feature>
<feature type="strand" evidence="7">
    <location>
        <begin position="138"/>
        <end position="140"/>
    </location>
</feature>
<feature type="helix" evidence="7">
    <location>
        <begin position="143"/>
        <end position="148"/>
    </location>
</feature>
<feature type="helix" evidence="7">
    <location>
        <begin position="150"/>
        <end position="156"/>
    </location>
</feature>
<feature type="strand" evidence="7">
    <location>
        <begin position="160"/>
        <end position="163"/>
    </location>
</feature>
<feature type="strand" evidence="7">
    <location>
        <begin position="170"/>
        <end position="172"/>
    </location>
</feature>
<feature type="strand" evidence="7">
    <location>
        <begin position="181"/>
        <end position="185"/>
    </location>
</feature>
<feature type="helix" evidence="7">
    <location>
        <begin position="187"/>
        <end position="189"/>
    </location>
</feature>
<feature type="helix" evidence="7">
    <location>
        <begin position="192"/>
        <end position="204"/>
    </location>
</feature>
<feature type="strand" evidence="7">
    <location>
        <begin position="208"/>
        <end position="213"/>
    </location>
</feature>
<feature type="strand" evidence="7">
    <location>
        <begin position="220"/>
        <end position="222"/>
    </location>
</feature>
<feature type="helix" evidence="7">
    <location>
        <begin position="225"/>
        <end position="228"/>
    </location>
</feature>
<feature type="helix" evidence="7">
    <location>
        <begin position="230"/>
        <end position="232"/>
    </location>
</feature>
<feature type="strand" evidence="7">
    <location>
        <begin position="233"/>
        <end position="238"/>
    </location>
</feature>
<feature type="strand" evidence="7">
    <location>
        <begin position="240"/>
        <end position="245"/>
    </location>
</feature>
<feature type="helix" evidence="7">
    <location>
        <begin position="250"/>
        <end position="267"/>
    </location>
</feature>
<feature type="strand" evidence="7">
    <location>
        <begin position="270"/>
        <end position="274"/>
    </location>
</feature>
<feature type="helix" evidence="7">
    <location>
        <begin position="277"/>
        <end position="279"/>
    </location>
</feature>
<feature type="strand" evidence="7">
    <location>
        <begin position="284"/>
        <end position="286"/>
    </location>
</feature>
<feature type="helix" evidence="7">
    <location>
        <begin position="288"/>
        <end position="297"/>
    </location>
</feature>
<feature type="strand" evidence="7">
    <location>
        <begin position="304"/>
        <end position="308"/>
    </location>
</feature>
<feature type="helix" evidence="7">
    <location>
        <begin position="315"/>
        <end position="318"/>
    </location>
</feature>
<feature type="strand" evidence="7">
    <location>
        <begin position="323"/>
        <end position="326"/>
    </location>
</feature>
<feature type="helix" evidence="7">
    <location>
        <begin position="329"/>
        <end position="339"/>
    </location>
</feature>
<feature type="helix" evidence="7">
    <location>
        <begin position="344"/>
        <end position="348"/>
    </location>
</feature>
<feature type="helix" evidence="7">
    <location>
        <begin position="353"/>
        <end position="362"/>
    </location>
</feature>
<feature type="strand" evidence="7">
    <location>
        <begin position="363"/>
        <end position="365"/>
    </location>
</feature>
<feature type="strand" evidence="7">
    <location>
        <begin position="367"/>
        <end position="371"/>
    </location>
</feature>
<feature type="strand" evidence="7">
    <location>
        <begin position="378"/>
        <end position="381"/>
    </location>
</feature>
<feature type="helix" evidence="7">
    <location>
        <begin position="389"/>
        <end position="391"/>
    </location>
</feature>
<feature type="strand" evidence="7">
    <location>
        <begin position="392"/>
        <end position="396"/>
    </location>
</feature>
<feature type="helix" evidence="7">
    <location>
        <begin position="399"/>
        <end position="403"/>
    </location>
</feature>
<feature type="helix" evidence="7">
    <location>
        <begin position="411"/>
        <end position="413"/>
    </location>
</feature>
<feature type="helix" evidence="7">
    <location>
        <begin position="419"/>
        <end position="430"/>
    </location>
</feature>
<feature type="strand" evidence="7">
    <location>
        <begin position="431"/>
        <end position="437"/>
    </location>
</feature>
<feature type="helix" evidence="7">
    <location>
        <begin position="440"/>
        <end position="442"/>
    </location>
</feature>
<feature type="helix" evidence="7">
    <location>
        <begin position="456"/>
        <end position="469"/>
    </location>
</feature>
<feature type="turn" evidence="8">
    <location>
        <begin position="470"/>
        <end position="472"/>
    </location>
</feature>
<feature type="helix" evidence="8">
    <location>
        <begin position="474"/>
        <end position="477"/>
    </location>
</feature>
<feature type="helix" evidence="7">
    <location>
        <begin position="487"/>
        <end position="491"/>
    </location>
</feature>
<feature type="helix" evidence="7">
    <location>
        <begin position="498"/>
        <end position="501"/>
    </location>
</feature>
<feature type="helix" evidence="7">
    <location>
        <begin position="503"/>
        <end position="521"/>
    </location>
</feature>
<feature type="turn" evidence="7">
    <location>
        <begin position="523"/>
        <end position="526"/>
    </location>
</feature>
<feature type="helix" evidence="7">
    <location>
        <begin position="530"/>
        <end position="532"/>
    </location>
</feature>
<feature type="strand" evidence="7">
    <location>
        <begin position="533"/>
        <end position="538"/>
    </location>
</feature>
<feature type="strand" evidence="7">
    <location>
        <begin position="541"/>
        <end position="548"/>
    </location>
</feature>
<feature type="strand" evidence="7">
    <location>
        <begin position="551"/>
        <end position="558"/>
    </location>
</feature>
<feature type="strand" evidence="7">
    <location>
        <begin position="560"/>
        <end position="562"/>
    </location>
</feature>
<feature type="helix" evidence="7">
    <location>
        <begin position="566"/>
        <end position="568"/>
    </location>
</feature>
<feature type="strand" evidence="7">
    <location>
        <begin position="578"/>
        <end position="582"/>
    </location>
</feature>
<feature type="strand" evidence="7">
    <location>
        <begin position="587"/>
        <end position="591"/>
    </location>
</feature>
<feature type="strand" evidence="7">
    <location>
        <begin position="596"/>
        <end position="600"/>
    </location>
</feature>
<proteinExistence type="evidence at protein level"/>
<protein>
    <recommendedName>
        <fullName>Malto-oligosyltrehalose trehalohydrolase</fullName>
        <shortName>MTHase</shortName>
        <ecNumber>3.2.1.141</ecNumber>
    </recommendedName>
    <alternativeName>
        <fullName>4-alpha-D-((1-&gt;4)-alpha-D-glucano)trehalose trehalohydrolase</fullName>
    </alternativeName>
    <alternativeName>
        <fullName>Maltooligosyl trehalose trehalohydrolase</fullName>
    </alternativeName>
</protein>
<sequence length="600" mass="66910">MTQTQPVTPTPPASFQTQHDPRTRLGATPLPGGAGTRFRLWTSTARTVAVRVNGTEHVMTSLGGGIYELELPVGPGARYLFVLDGVPTPDPYARFLPDGVHGEAEVVDFGTFDWTDADWHGIKLADCVFYEVHVGTFTPEGTYRAAAEKLPYLKELGVTAIQVMPLAAFDGQRGWGYDGAAFYAPYAPYGRPEDLMALVDAAHRLGLGVFLDVVYNHFGPSGNYLSSYAPSYFTDRFSSAWGMGLDYAEPHMRRYVTGNARMWLRDYHFDGLRLDATPYMTDDSETHILTELAQEIHELGGTHLLLAEDHRNLPDLVTVNHLDGIWTDDFHHETRVTLTGEQEGYYAGYRGGAEALAYTIRRGWRYEGQFWAVKGEEHERGHPSDALEAPNFVYCIQNHDQIGNRPLGERLHQSDGVTLHEYRGAAALLLPMTPLLFQGQEWAASTPFQFFSDHAGELGQAVSEGRKKEFGGFSGFSGEDVPDPQAEQTFLNSKLNWAEREGGEHARTLRLYRDLLRLRREDPVLHNRQRENLTTGHDGDVLWVRTVTGAGERVLLWNLGQDTRAVAEVKLPFTVPRRLLLHTEGREDLTLGAGEAVLVG</sequence>
<gene>
    <name type="primary">treZ</name>
    <name type="ordered locus">DR_0464</name>
</gene>